<proteinExistence type="inferred from homology"/>
<organism>
    <name type="scientific">Thermococcus kodakarensis (strain ATCC BAA-918 / JCM 12380 / KOD1)</name>
    <name type="common">Pyrococcus kodakaraensis (strain KOD1)</name>
    <dbReference type="NCBI Taxonomy" id="69014"/>
    <lineage>
        <taxon>Archaea</taxon>
        <taxon>Methanobacteriati</taxon>
        <taxon>Methanobacteriota</taxon>
        <taxon>Thermococci</taxon>
        <taxon>Thermococcales</taxon>
        <taxon>Thermococcaceae</taxon>
        <taxon>Thermococcus</taxon>
    </lineage>
</organism>
<sequence length="267" mass="29804">MPRIAIIGGSGVYDPALLTNIREETVETPYGTVKVKIGEYNGEEIVFLARHGEGHSVPPHKINYRANIWALYELGVERILSTSAVGSLNLDMKPGDFVILDQLMDFTKTRHYTFYDGEESPHDRKFVAHVDFTEPYCPELRKALMNAARELGFTYHPMGTYACMEGPRFETRAEIRALKILGADVVGMTQCPEAALARELEMCYASVAIVTNYAAGISPNKLTHTEVVELMAQKSNEIKLLLMKAIEYIPKERRCPCKDALKGATGE</sequence>
<gene>
    <name type="ordered locus">TK1482</name>
</gene>
<accession>Q5JJB8</accession>
<keyword id="KW-0328">Glycosyltransferase</keyword>
<keyword id="KW-0660">Purine salvage</keyword>
<keyword id="KW-1185">Reference proteome</keyword>
<keyword id="KW-0808">Transferase</keyword>
<comment type="function">
    <text evidence="2 4">Purine nucleoside phosphorylase which is highly specific for 6-oxopurine nucleosides. Cleaves guanosine or inosine to respective bases and sugar-1-phosphate molecules. Involved in purine salvage.</text>
</comment>
<comment type="catalytic activity">
    <reaction evidence="2 4">
        <text>a purine D-ribonucleoside + phosphate = a purine nucleobase + alpha-D-ribose 1-phosphate</text>
        <dbReference type="Rhea" id="RHEA:19805"/>
        <dbReference type="ChEBI" id="CHEBI:26386"/>
        <dbReference type="ChEBI" id="CHEBI:43474"/>
        <dbReference type="ChEBI" id="CHEBI:57720"/>
        <dbReference type="ChEBI" id="CHEBI:142355"/>
        <dbReference type="EC" id="2.4.2.1"/>
    </reaction>
</comment>
<comment type="catalytic activity">
    <reaction evidence="1 4">
        <text>guanosine + phosphate = alpha-D-ribose 1-phosphate + guanine</text>
        <dbReference type="Rhea" id="RHEA:13233"/>
        <dbReference type="ChEBI" id="CHEBI:16235"/>
        <dbReference type="ChEBI" id="CHEBI:16750"/>
        <dbReference type="ChEBI" id="CHEBI:43474"/>
        <dbReference type="ChEBI" id="CHEBI:57720"/>
        <dbReference type="EC" id="2.4.2.1"/>
    </reaction>
</comment>
<comment type="catalytic activity">
    <reaction evidence="1">
        <text>inosine + phosphate = alpha-D-ribose 1-phosphate + hypoxanthine</text>
        <dbReference type="Rhea" id="RHEA:27646"/>
        <dbReference type="ChEBI" id="CHEBI:17368"/>
        <dbReference type="ChEBI" id="CHEBI:17596"/>
        <dbReference type="ChEBI" id="CHEBI:43474"/>
        <dbReference type="ChEBI" id="CHEBI:57720"/>
        <dbReference type="EC" id="2.4.2.1"/>
    </reaction>
</comment>
<comment type="pathway">
    <text evidence="2">Purine metabolism; purine nucleoside salvage.</text>
</comment>
<comment type="subunit">
    <text evidence="2">Homohexamer. Dimer of a homotrimer.</text>
</comment>
<comment type="disruption phenotype">
    <text evidence="3">Disruption of the gene results in a complete loss of ribose 1,5-bisphosphate generation from guanosine.</text>
</comment>
<comment type="miscellaneous">
    <text evidence="2">Although this enzyme belongs to the family of MTA phosphorylases based on sequence homology, it has been shown that conserved amino acid substitutions in the substrate binding pocket convert the substrate specificity of this enzyme from 6-aminopurines to 6-oxopurines.</text>
</comment>
<comment type="similarity">
    <text evidence="2">Belongs to the PNP/MTAP phosphorylase family. MTAP subfamily.</text>
</comment>
<dbReference type="EC" id="2.4.2.1" evidence="2 4"/>
<dbReference type="EMBL" id="AP006878">
    <property type="protein sequence ID" value="BAD85671.1"/>
    <property type="molecule type" value="Genomic_DNA"/>
</dbReference>
<dbReference type="RefSeq" id="WP_011250433.1">
    <property type="nucleotide sequence ID" value="NC_006624.1"/>
</dbReference>
<dbReference type="SMR" id="Q5JJB8"/>
<dbReference type="FunCoup" id="Q5JJB8">
    <property type="interactions" value="132"/>
</dbReference>
<dbReference type="IntAct" id="Q5JJB8">
    <property type="interactions" value="1"/>
</dbReference>
<dbReference type="MINT" id="Q5JJB8"/>
<dbReference type="STRING" id="69014.TK1482"/>
<dbReference type="EnsemblBacteria" id="BAD85671">
    <property type="protein sequence ID" value="BAD85671"/>
    <property type="gene ID" value="TK1482"/>
</dbReference>
<dbReference type="GeneID" id="78448006"/>
<dbReference type="KEGG" id="tko:TK1482"/>
<dbReference type="PATRIC" id="fig|69014.16.peg.1443"/>
<dbReference type="eggNOG" id="arCOG01327">
    <property type="taxonomic scope" value="Archaea"/>
</dbReference>
<dbReference type="HOGENOM" id="CLU_054456_0_2_2"/>
<dbReference type="InParanoid" id="Q5JJB8"/>
<dbReference type="OrthoDB" id="7681at2157"/>
<dbReference type="PhylomeDB" id="Q5JJB8"/>
<dbReference type="BioCyc" id="MetaCyc:MONOMER-19658"/>
<dbReference type="UniPathway" id="UPA00606"/>
<dbReference type="Proteomes" id="UP000000536">
    <property type="component" value="Chromosome"/>
</dbReference>
<dbReference type="GO" id="GO:0005829">
    <property type="term" value="C:cytosol"/>
    <property type="evidence" value="ECO:0000318"/>
    <property type="project" value="GO_Central"/>
</dbReference>
<dbReference type="GO" id="GO:0047975">
    <property type="term" value="F:guanosine phosphorylase activity"/>
    <property type="evidence" value="ECO:0007669"/>
    <property type="project" value="RHEA"/>
</dbReference>
<dbReference type="GO" id="GO:0017061">
    <property type="term" value="F:S-methyl-5-thioadenosine phosphorylase activity"/>
    <property type="evidence" value="ECO:0000318"/>
    <property type="project" value="GO_Central"/>
</dbReference>
<dbReference type="GO" id="GO:0019509">
    <property type="term" value="P:L-methionine salvage from methylthioadenosine"/>
    <property type="evidence" value="ECO:0000318"/>
    <property type="project" value="GO_Central"/>
</dbReference>
<dbReference type="GO" id="GO:0006166">
    <property type="term" value="P:purine ribonucleoside salvage"/>
    <property type="evidence" value="ECO:0007669"/>
    <property type="project" value="UniProtKB-UniRule"/>
</dbReference>
<dbReference type="CDD" id="cd09010">
    <property type="entry name" value="MTAP_SsMTAPII_like_MTIP"/>
    <property type="match status" value="1"/>
</dbReference>
<dbReference type="FunFam" id="3.40.50.1580:FF:000012">
    <property type="entry name" value="Probable 6-oxopurine nucleoside phosphorylase"/>
    <property type="match status" value="1"/>
</dbReference>
<dbReference type="Gene3D" id="3.40.50.1580">
    <property type="entry name" value="Nucleoside phosphorylase domain"/>
    <property type="match status" value="1"/>
</dbReference>
<dbReference type="HAMAP" id="MF_01963">
    <property type="entry name" value="MTAP"/>
    <property type="match status" value="1"/>
</dbReference>
<dbReference type="InterPro" id="IPR010044">
    <property type="entry name" value="MTAP"/>
</dbReference>
<dbReference type="InterPro" id="IPR000845">
    <property type="entry name" value="Nucleoside_phosphorylase_d"/>
</dbReference>
<dbReference type="InterPro" id="IPR035994">
    <property type="entry name" value="Nucleoside_phosphorylase_sf"/>
</dbReference>
<dbReference type="InterPro" id="IPR018099">
    <property type="entry name" value="Purine_phosphorylase-2_CS"/>
</dbReference>
<dbReference type="NCBIfam" id="TIGR01694">
    <property type="entry name" value="MTAP"/>
    <property type="match status" value="1"/>
</dbReference>
<dbReference type="NCBIfam" id="NF006599">
    <property type="entry name" value="PRK09136.1"/>
    <property type="match status" value="1"/>
</dbReference>
<dbReference type="PANTHER" id="PTHR42679">
    <property type="entry name" value="S-METHYL-5'-THIOADENOSINE PHOSPHORYLASE"/>
    <property type="match status" value="1"/>
</dbReference>
<dbReference type="PANTHER" id="PTHR42679:SF2">
    <property type="entry name" value="S-METHYL-5'-THIOADENOSINE PHOSPHORYLASE"/>
    <property type="match status" value="1"/>
</dbReference>
<dbReference type="Pfam" id="PF01048">
    <property type="entry name" value="PNP_UDP_1"/>
    <property type="match status" value="1"/>
</dbReference>
<dbReference type="SUPFAM" id="SSF53167">
    <property type="entry name" value="Purine and uridine phosphorylases"/>
    <property type="match status" value="1"/>
</dbReference>
<dbReference type="PROSITE" id="PS01240">
    <property type="entry name" value="PNP_MTAP_2"/>
    <property type="match status" value="1"/>
</dbReference>
<evidence type="ECO:0000250" key="1">
    <source>
        <dbReference type="UniProtKB" id="Q8U2I1"/>
    </source>
</evidence>
<evidence type="ECO:0000255" key="2">
    <source>
        <dbReference type="HAMAP-Rule" id="MF_01963"/>
    </source>
</evidence>
<evidence type="ECO:0000269" key="3">
    <source>
    </source>
</evidence>
<evidence type="ECO:0000305" key="4">
    <source>
    </source>
</evidence>
<name>PNPH_THEKO</name>
<reference key="1">
    <citation type="journal article" date="2005" name="Genome Res.">
        <title>Complete genome sequence of the hyperthermophilic archaeon Thermococcus kodakaraensis KOD1 and comparison with Pyrococcus genomes.</title>
        <authorList>
            <person name="Fukui T."/>
            <person name="Atomi H."/>
            <person name="Kanai T."/>
            <person name="Matsumi R."/>
            <person name="Fujiwara S."/>
            <person name="Imanaka T."/>
        </authorList>
    </citation>
    <scope>NUCLEOTIDE SEQUENCE [LARGE SCALE GENOMIC DNA]</scope>
    <source>
        <strain>ATCC BAA-918 / JCM 12380 / KOD1</strain>
    </source>
</reference>
<reference key="2">
    <citation type="journal article" date="2015" name="Nat. Chem. Biol.">
        <title>A pentose bisphosphate pathway for nucleoside degradation in Archaea.</title>
        <authorList>
            <person name="Aono R."/>
            <person name="Sato T."/>
            <person name="Imanaka T."/>
            <person name="Atomi H."/>
        </authorList>
    </citation>
    <scope>FUNCTION</scope>
    <scope>DISRUPTION PHENOTYPE</scope>
    <source>
        <strain>ATCC BAA-918 / JCM 12380 / KOD1</strain>
    </source>
</reference>
<feature type="chain" id="PRO_0000415087" description="Probable 6-oxopurine nucleoside phosphorylase">
    <location>
        <begin position="1"/>
        <end position="267"/>
    </location>
</feature>
<feature type="binding site" evidence="2">
    <location>
        <position position="10"/>
    </location>
    <ligand>
        <name>phosphate</name>
        <dbReference type="ChEBI" id="CHEBI:43474"/>
    </ligand>
</feature>
<feature type="binding site" evidence="2">
    <location>
        <begin position="50"/>
        <end position="51"/>
    </location>
    <ligand>
        <name>phosphate</name>
        <dbReference type="ChEBI" id="CHEBI:43474"/>
    </ligand>
</feature>
<feature type="binding site" evidence="2">
    <location>
        <begin position="83"/>
        <end position="84"/>
    </location>
    <ligand>
        <name>phosphate</name>
        <dbReference type="ChEBI" id="CHEBI:43474"/>
    </ligand>
</feature>
<feature type="binding site" evidence="2">
    <location>
        <position position="188"/>
    </location>
    <ligand>
        <name>substrate</name>
    </ligand>
</feature>
<feature type="binding site" evidence="2">
    <location>
        <position position="189"/>
    </location>
    <ligand>
        <name>phosphate</name>
        <dbReference type="ChEBI" id="CHEBI:43474"/>
    </ligand>
</feature>
<feature type="binding site" evidence="2">
    <location>
        <begin position="212"/>
        <end position="214"/>
    </location>
    <ligand>
        <name>substrate</name>
    </ligand>
</feature>
<feature type="site" description="Important for substrate specificity" evidence="2">
    <location>
        <position position="170"/>
    </location>
</feature>
<feature type="site" description="Important for substrate specificity" evidence="2">
    <location>
        <position position="224"/>
    </location>
</feature>
<protein>
    <recommendedName>
        <fullName evidence="2">Probable 6-oxopurine nucleoside phosphorylase</fullName>
        <ecNumber evidence="2 4">2.4.2.1</ecNumber>
    </recommendedName>
    <alternativeName>
        <fullName evidence="2">Purine nucleoside phosphorylase</fullName>
        <shortName evidence="2">PNP</shortName>
    </alternativeName>
</protein>